<protein>
    <recommendedName>
        <fullName>Profilin-2</fullName>
    </recommendedName>
    <alternativeName>
        <fullName>Pollen allergen Ole e 2</fullName>
    </alternativeName>
    <allergenName>Ole e 2</allergenName>
</protein>
<proteinExistence type="evidence at protein level"/>
<evidence type="ECO:0000250" key="1"/>
<evidence type="ECO:0000305" key="2"/>
<evidence type="ECO:0000305" key="3">
    <source>
    </source>
</evidence>
<reference key="1">
    <citation type="journal article" date="2012" name="PLoS ONE">
        <title>Characterization of profilin polymorphism in pollen with a focus on multifunctionality.</title>
        <authorList>
            <person name="Jimenez-Lopez J.C."/>
            <person name="Morales S."/>
            <person name="Castro A.J."/>
            <person name="Volkmann D."/>
            <person name="Rodriguez-Garcia M.I."/>
            <person name="Alche Jde D."/>
        </authorList>
    </citation>
    <scope>NUCLEOTIDE SEQUENCE [MRNA]</scope>
    <scope>POLYMORPHISM</scope>
    <source>
        <strain>cv. Sourani</strain>
        <tissue>Pollen</tissue>
    </source>
</reference>
<reference key="2">
    <citation type="journal article" date="2013" name="PLoS ONE">
        <title>Analysis of the effects of polymorphism on pollen profilin structural functionality and the generation of conformational, T- and B-cell epitopes.</title>
        <authorList>
            <person name="Jimenez-Lopez J.C."/>
            <person name="Rodriguez-Garcia M.I."/>
            <person name="Alche J.D."/>
        </authorList>
    </citation>
    <scope>3D-STRUCTURE MODELING</scope>
    <scope>DISULFIDE BOND</scope>
</reference>
<organism>
    <name type="scientific">Olea europaea</name>
    <name type="common">Common olive</name>
    <dbReference type="NCBI Taxonomy" id="4146"/>
    <lineage>
        <taxon>Eukaryota</taxon>
        <taxon>Viridiplantae</taxon>
        <taxon>Streptophyta</taxon>
        <taxon>Embryophyta</taxon>
        <taxon>Tracheophyta</taxon>
        <taxon>Spermatophyta</taxon>
        <taxon>Magnoliopsida</taxon>
        <taxon>eudicotyledons</taxon>
        <taxon>Gunneridae</taxon>
        <taxon>Pentapetalae</taxon>
        <taxon>asterids</taxon>
        <taxon>lamiids</taxon>
        <taxon>Lamiales</taxon>
        <taxon>Oleaceae</taxon>
        <taxon>Oleeae</taxon>
        <taxon>Olea</taxon>
    </lineage>
</organism>
<comment type="function">
    <text evidence="1">Binds to actin and affects the structure of the cytoskeleton. At high concentrations, profilin prevents the polymerization of actin, whereas it enhances it at low concentrations (By similarity).</text>
</comment>
<comment type="subunit">
    <text evidence="1">Occurs in many kinds of cells as a complex with monomeric actin in a 1:1 ratio.</text>
</comment>
<comment type="subcellular location">
    <subcellularLocation>
        <location evidence="1">Cytoplasm</location>
        <location evidence="1">Cytoskeleton</location>
    </subcellularLocation>
</comment>
<comment type="PTM">
    <text evidence="1">Phosphorylated by MAP kinases.</text>
</comment>
<comment type="polymorphism">
    <text>Several isoforms of the allergen exist due to polymorphism.</text>
</comment>
<comment type="allergen">
    <text>Causes an allergic reaction in human.</text>
</comment>
<comment type="miscellaneous">
    <text evidence="3">The variability of the residues taking part of IgE-binding epitopes might be responsible of the difference in cross-reactivity among olive pollen cultivars, and between distantly related pollen species, leading to a variable range of allergy reactions among atopic patients.</text>
</comment>
<comment type="similarity">
    <text evidence="2">Belongs to the profilin family.</text>
</comment>
<feature type="initiator methionine" description="Removed" evidence="1">
    <location>
        <position position="1"/>
    </location>
</feature>
<feature type="chain" id="PRO_0000425041" description="Profilin-2">
    <location>
        <begin position="2"/>
        <end position="134"/>
    </location>
</feature>
<feature type="short sequence motif" description="Involved in PIP2 interaction">
    <location>
        <begin position="84"/>
        <end position="100"/>
    </location>
</feature>
<feature type="modified residue" description="Phosphothreonine" evidence="1">
    <location>
        <position position="114"/>
    </location>
</feature>
<feature type="disulfide bond" evidence="3">
    <location>
        <begin position="13"/>
        <end position="118"/>
    </location>
</feature>
<keyword id="KW-0009">Actin-binding</keyword>
<keyword id="KW-0020">Allergen</keyword>
<keyword id="KW-0963">Cytoplasm</keyword>
<keyword id="KW-0206">Cytoskeleton</keyword>
<keyword id="KW-1015">Disulfide bond</keyword>
<keyword id="KW-0597">Phosphoprotein</keyword>
<accession>A4GE53</accession>
<dbReference type="EMBL" id="DQ317578">
    <property type="protein sequence ID" value="ABC47421.1"/>
    <property type="molecule type" value="mRNA"/>
</dbReference>
<dbReference type="SMR" id="A4GE53"/>
<dbReference type="Allergome" id="490">
    <property type="allergen name" value="Ole e 2"/>
</dbReference>
<dbReference type="GO" id="GO:0005938">
    <property type="term" value="C:cell cortex"/>
    <property type="evidence" value="ECO:0007669"/>
    <property type="project" value="TreeGrafter"/>
</dbReference>
<dbReference type="GO" id="GO:0005856">
    <property type="term" value="C:cytoskeleton"/>
    <property type="evidence" value="ECO:0007669"/>
    <property type="project" value="UniProtKB-SubCell"/>
</dbReference>
<dbReference type="GO" id="GO:0003785">
    <property type="term" value="F:actin monomer binding"/>
    <property type="evidence" value="ECO:0007669"/>
    <property type="project" value="TreeGrafter"/>
</dbReference>
<dbReference type="CDD" id="cd00148">
    <property type="entry name" value="PROF"/>
    <property type="match status" value="1"/>
</dbReference>
<dbReference type="FunFam" id="3.30.450.30:FF:000001">
    <property type="entry name" value="Profilin"/>
    <property type="match status" value="1"/>
</dbReference>
<dbReference type="Gene3D" id="3.30.450.30">
    <property type="entry name" value="Dynein light chain 2a, cytoplasmic"/>
    <property type="match status" value="1"/>
</dbReference>
<dbReference type="InterPro" id="IPR048278">
    <property type="entry name" value="PFN"/>
</dbReference>
<dbReference type="InterPro" id="IPR005455">
    <property type="entry name" value="PFN_euk"/>
</dbReference>
<dbReference type="InterPro" id="IPR036140">
    <property type="entry name" value="PFN_sf"/>
</dbReference>
<dbReference type="InterPro" id="IPR027310">
    <property type="entry name" value="Profilin_CS"/>
</dbReference>
<dbReference type="PANTHER" id="PTHR11604">
    <property type="entry name" value="PROFILIN"/>
    <property type="match status" value="1"/>
</dbReference>
<dbReference type="PANTHER" id="PTHR11604:SF25">
    <property type="entry name" value="PROFILIN-5"/>
    <property type="match status" value="1"/>
</dbReference>
<dbReference type="Pfam" id="PF00235">
    <property type="entry name" value="Profilin"/>
    <property type="match status" value="1"/>
</dbReference>
<dbReference type="PRINTS" id="PR00392">
    <property type="entry name" value="PROFILIN"/>
</dbReference>
<dbReference type="PRINTS" id="PR01640">
    <property type="entry name" value="PROFILINPLNT"/>
</dbReference>
<dbReference type="SMART" id="SM00392">
    <property type="entry name" value="PROF"/>
    <property type="match status" value="1"/>
</dbReference>
<dbReference type="SUPFAM" id="SSF55770">
    <property type="entry name" value="Profilin (actin-binding protein)"/>
    <property type="match status" value="1"/>
</dbReference>
<dbReference type="PROSITE" id="PS00414">
    <property type="entry name" value="PROFILIN"/>
    <property type="match status" value="1"/>
</dbReference>
<sequence>MSWQAYVDDHLMCDIEGHEGHRLTAAAIVGHDGSVWAQSATFPQFKPEEMNGIMTDFNEPGHLAPTGLHLGGTKYMVIQGEAGAVIRGKKGSGGITIKKTGQALVCGIYEEPVTPGQCNMVVERLGDYLLEQGM</sequence>
<name>PROBX_OLEEU</name>